<accession>Q63041</accession>
<accession>Q63332</accession>
<dbReference type="EMBL" id="M77183">
    <property type="protein sequence ID" value="AAA40723.1"/>
    <property type="molecule type" value="mRNA"/>
</dbReference>
<dbReference type="EMBL" id="M84000">
    <property type="protein sequence ID" value="AAA41591.1"/>
    <property type="molecule type" value="mRNA"/>
</dbReference>
<dbReference type="PIR" id="A42210">
    <property type="entry name" value="A42210"/>
</dbReference>
<dbReference type="RefSeq" id="NP_665722.2">
    <property type="nucleotide sequence ID" value="NM_145779.2"/>
</dbReference>
<dbReference type="PDB" id="1EDY">
    <property type="method" value="X-ray"/>
    <property type="resolution" value="2.30 A"/>
    <property type="chains" value="A/B=1362-1495"/>
</dbReference>
<dbReference type="PDBsum" id="1EDY"/>
<dbReference type="SMR" id="Q63041"/>
<dbReference type="BioGRID" id="251671">
    <property type="interactions" value="1"/>
</dbReference>
<dbReference type="FunCoup" id="Q63041">
    <property type="interactions" value="90"/>
</dbReference>
<dbReference type="IntAct" id="Q63041">
    <property type="interactions" value="1"/>
</dbReference>
<dbReference type="STRING" id="10116.ENSRNOP00000009467"/>
<dbReference type="MEROPS" id="I39.001"/>
<dbReference type="GlyCosmos" id="Q63041">
    <property type="glycosylation" value="11 sites, No reported glycans"/>
</dbReference>
<dbReference type="GlyGen" id="Q63041">
    <property type="glycosylation" value="13 sites, 1 O-linked glycan (1 site)"/>
</dbReference>
<dbReference type="PhosphoSitePlus" id="Q63041"/>
<dbReference type="PaxDb" id="10116-ENSRNOP00000009467"/>
<dbReference type="GeneID" id="252922"/>
<dbReference type="KEGG" id="rno:252922"/>
<dbReference type="UCSC" id="RGD:628643">
    <property type="organism name" value="rat"/>
</dbReference>
<dbReference type="AGR" id="RGD:628643"/>
<dbReference type="CTD" id="5858"/>
<dbReference type="RGD" id="628643">
    <property type="gene designation" value="Pzp"/>
</dbReference>
<dbReference type="VEuPathDB" id="HostDB:ENSRNOG00000006709"/>
<dbReference type="eggNOG" id="KOG1366">
    <property type="taxonomic scope" value="Eukaryota"/>
</dbReference>
<dbReference type="HOGENOM" id="CLU_001634_0_1_1"/>
<dbReference type="InParanoid" id="Q63041"/>
<dbReference type="OrthoDB" id="42311at9989"/>
<dbReference type="PhylomeDB" id="Q63041"/>
<dbReference type="TreeFam" id="TF313285"/>
<dbReference type="EvolutionaryTrace" id="Q63041"/>
<dbReference type="PRO" id="PR:Q63041"/>
<dbReference type="Proteomes" id="UP000002494">
    <property type="component" value="Chromosome 4"/>
</dbReference>
<dbReference type="Bgee" id="ENSRNOG00000006709">
    <property type="expression patterns" value="Expressed in liver and 15 other cell types or tissues"/>
</dbReference>
<dbReference type="GO" id="GO:0005615">
    <property type="term" value="C:extracellular space"/>
    <property type="evidence" value="ECO:0007669"/>
    <property type="project" value="InterPro"/>
</dbReference>
<dbReference type="GO" id="GO:0048403">
    <property type="term" value="F:brain-derived neurotrophic factor binding"/>
    <property type="evidence" value="ECO:0000314"/>
    <property type="project" value="RGD"/>
</dbReference>
<dbReference type="GO" id="GO:0004866">
    <property type="term" value="F:endopeptidase inhibitor activity"/>
    <property type="evidence" value="ECO:0000318"/>
    <property type="project" value="GO_Central"/>
</dbReference>
<dbReference type="GO" id="GO:0048406">
    <property type="term" value="F:nerve growth factor binding"/>
    <property type="evidence" value="ECO:0000314"/>
    <property type="project" value="RGD"/>
</dbReference>
<dbReference type="GO" id="GO:0002020">
    <property type="term" value="F:protease binding"/>
    <property type="evidence" value="ECO:0000318"/>
    <property type="project" value="GO_Central"/>
</dbReference>
<dbReference type="GO" id="GO:0044877">
    <property type="term" value="F:protein-containing complex binding"/>
    <property type="evidence" value="ECO:0000353"/>
    <property type="project" value="RGD"/>
</dbReference>
<dbReference type="GO" id="GO:0004867">
    <property type="term" value="F:serine-type endopeptidase inhibitor activity"/>
    <property type="evidence" value="ECO:0007669"/>
    <property type="project" value="UniProtKB-KW"/>
</dbReference>
<dbReference type="CDD" id="cd02897">
    <property type="entry name" value="A2M_2"/>
    <property type="match status" value="1"/>
</dbReference>
<dbReference type="FunFam" id="2.60.40.1940:FF:000002">
    <property type="entry name" value="Alpha-2-macroglobulin"/>
    <property type="match status" value="1"/>
</dbReference>
<dbReference type="FunFam" id="2.60.40.10:FF:000312">
    <property type="entry name" value="Alpha-2-macroglobulin like 1"/>
    <property type="match status" value="1"/>
</dbReference>
<dbReference type="FunFam" id="1.50.10.20:FF:000001">
    <property type="entry name" value="CD109 isoform 1"/>
    <property type="match status" value="1"/>
</dbReference>
<dbReference type="FunFam" id="2.60.40.1930:FF:000001">
    <property type="entry name" value="CD109 isoform 3"/>
    <property type="match status" value="1"/>
</dbReference>
<dbReference type="FunFam" id="2.60.40.1930:FF:000002">
    <property type="entry name" value="PZP, alpha-2-macroglobulin like"/>
    <property type="match status" value="1"/>
</dbReference>
<dbReference type="FunFam" id="2.60.40.690:FF:000001">
    <property type="entry name" value="PZP, alpha-2-macroglobulin like"/>
    <property type="match status" value="1"/>
</dbReference>
<dbReference type="Gene3D" id="1.50.10.20">
    <property type="match status" value="1"/>
</dbReference>
<dbReference type="Gene3D" id="2.20.130.20">
    <property type="match status" value="1"/>
</dbReference>
<dbReference type="Gene3D" id="2.60.120.1540">
    <property type="match status" value="1"/>
</dbReference>
<dbReference type="Gene3D" id="2.60.40.1930">
    <property type="match status" value="2"/>
</dbReference>
<dbReference type="Gene3D" id="2.60.40.1940">
    <property type="match status" value="1"/>
</dbReference>
<dbReference type="Gene3D" id="6.20.50.160">
    <property type="match status" value="1"/>
</dbReference>
<dbReference type="Gene3D" id="2.60.40.690">
    <property type="entry name" value="Alpha-macroglobulin, receptor-binding domain"/>
    <property type="match status" value="1"/>
</dbReference>
<dbReference type="Gene3D" id="2.60.40.10">
    <property type="entry name" value="Immunoglobulins"/>
    <property type="match status" value="2"/>
</dbReference>
<dbReference type="InterPro" id="IPR009048">
    <property type="entry name" value="A-macroglobulin_rcpt-bd"/>
</dbReference>
<dbReference type="InterPro" id="IPR036595">
    <property type="entry name" value="A-macroglobulin_rcpt-bd_sf"/>
</dbReference>
<dbReference type="InterPro" id="IPR050473">
    <property type="entry name" value="A2M/Complement_sys"/>
</dbReference>
<dbReference type="InterPro" id="IPR011625">
    <property type="entry name" value="A2M_N_BRD"/>
</dbReference>
<dbReference type="InterPro" id="IPR041813">
    <property type="entry name" value="A2M_TED"/>
</dbReference>
<dbReference type="InterPro" id="IPR047565">
    <property type="entry name" value="Alpha-macroglob_thiol-ester_cl"/>
</dbReference>
<dbReference type="InterPro" id="IPR011626">
    <property type="entry name" value="Alpha-macroglobulin_TED"/>
</dbReference>
<dbReference type="InterPro" id="IPR013783">
    <property type="entry name" value="Ig-like_fold"/>
</dbReference>
<dbReference type="InterPro" id="IPR014756">
    <property type="entry name" value="Ig_E-set"/>
</dbReference>
<dbReference type="InterPro" id="IPR001599">
    <property type="entry name" value="Macroglobln_a2"/>
</dbReference>
<dbReference type="InterPro" id="IPR019742">
    <property type="entry name" value="MacrogloblnA2_CS"/>
</dbReference>
<dbReference type="InterPro" id="IPR002890">
    <property type="entry name" value="MG2"/>
</dbReference>
<dbReference type="InterPro" id="IPR041555">
    <property type="entry name" value="MG3"/>
</dbReference>
<dbReference type="InterPro" id="IPR040839">
    <property type="entry name" value="MG4"/>
</dbReference>
<dbReference type="InterPro" id="IPR008930">
    <property type="entry name" value="Terpenoid_cyclase/PrenylTrfase"/>
</dbReference>
<dbReference type="PANTHER" id="PTHR11412">
    <property type="entry name" value="MACROGLOBULIN / COMPLEMENT"/>
    <property type="match status" value="1"/>
</dbReference>
<dbReference type="PANTHER" id="PTHR11412:SF116">
    <property type="entry name" value="PREGNANCY ZONE PROTEIN"/>
    <property type="match status" value="1"/>
</dbReference>
<dbReference type="Pfam" id="PF00207">
    <property type="entry name" value="A2M"/>
    <property type="match status" value="1"/>
</dbReference>
<dbReference type="Pfam" id="PF07703">
    <property type="entry name" value="A2M_BRD"/>
    <property type="match status" value="1"/>
</dbReference>
<dbReference type="Pfam" id="PF07677">
    <property type="entry name" value="A2M_recep"/>
    <property type="match status" value="1"/>
</dbReference>
<dbReference type="Pfam" id="PF01835">
    <property type="entry name" value="MG2"/>
    <property type="match status" value="1"/>
</dbReference>
<dbReference type="Pfam" id="PF17791">
    <property type="entry name" value="MG3"/>
    <property type="match status" value="1"/>
</dbReference>
<dbReference type="Pfam" id="PF17789">
    <property type="entry name" value="MG4"/>
    <property type="match status" value="1"/>
</dbReference>
<dbReference type="Pfam" id="PF07678">
    <property type="entry name" value="TED_complement"/>
    <property type="match status" value="1"/>
</dbReference>
<dbReference type="SMART" id="SM01360">
    <property type="entry name" value="A2M"/>
    <property type="match status" value="1"/>
</dbReference>
<dbReference type="SMART" id="SM01359">
    <property type="entry name" value="A2M_N_2"/>
    <property type="match status" value="1"/>
</dbReference>
<dbReference type="SMART" id="SM01361">
    <property type="entry name" value="A2M_recep"/>
    <property type="match status" value="1"/>
</dbReference>
<dbReference type="SMART" id="SM01419">
    <property type="entry name" value="Thiol-ester_cl"/>
    <property type="match status" value="1"/>
</dbReference>
<dbReference type="SUPFAM" id="SSF49410">
    <property type="entry name" value="Alpha-macroglobulin receptor domain"/>
    <property type="match status" value="1"/>
</dbReference>
<dbReference type="SUPFAM" id="SSF81296">
    <property type="entry name" value="E set domains"/>
    <property type="match status" value="1"/>
</dbReference>
<dbReference type="SUPFAM" id="SSF48239">
    <property type="entry name" value="Terpenoid cyclases/Protein prenyltransferases"/>
    <property type="match status" value="1"/>
</dbReference>
<dbReference type="PROSITE" id="PS00477">
    <property type="entry name" value="ALPHA_2_MACROGLOBULIN"/>
    <property type="match status" value="1"/>
</dbReference>
<evidence type="ECO:0000250" key="1">
    <source>
        <dbReference type="UniProtKB" id="P01023"/>
    </source>
</evidence>
<evidence type="ECO:0000255" key="2"/>
<evidence type="ECO:0000269" key="3">
    <source>
    </source>
</evidence>
<evidence type="ECO:0000269" key="4">
    <source>
    </source>
</evidence>
<evidence type="ECO:0000305" key="5"/>
<evidence type="ECO:0000312" key="6">
    <source>
        <dbReference type="EMBL" id="AAA40723.1"/>
    </source>
</evidence>
<evidence type="ECO:0000312" key="7">
    <source>
        <dbReference type="EMBL" id="AAA41591.1"/>
    </source>
</evidence>
<evidence type="ECO:0000312" key="8">
    <source>
        <dbReference type="PDB" id="1EDY"/>
    </source>
</evidence>
<evidence type="ECO:0000312" key="9">
    <source>
        <dbReference type="RGD" id="628643"/>
    </source>
</evidence>
<evidence type="ECO:0007829" key="10">
    <source>
        <dbReference type="PDB" id="1EDY"/>
    </source>
</evidence>
<proteinExistence type="evidence at protein level"/>
<gene>
    <name evidence="6" type="primary">A1m</name>
    <name evidence="9" type="synonym">Pzp</name>
</gene>
<organism>
    <name type="scientific">Rattus norvegicus</name>
    <name type="common">Rat</name>
    <dbReference type="NCBI Taxonomy" id="10116"/>
    <lineage>
        <taxon>Eukaryota</taxon>
        <taxon>Metazoa</taxon>
        <taxon>Chordata</taxon>
        <taxon>Craniata</taxon>
        <taxon>Vertebrata</taxon>
        <taxon>Euteleostomi</taxon>
        <taxon>Mammalia</taxon>
        <taxon>Eutheria</taxon>
        <taxon>Euarchontoglires</taxon>
        <taxon>Glires</taxon>
        <taxon>Rodentia</taxon>
        <taxon>Myomorpha</taxon>
        <taxon>Muroidea</taxon>
        <taxon>Muridae</taxon>
        <taxon>Murinae</taxon>
        <taxon>Rattus</taxon>
    </lineage>
</organism>
<reference evidence="5 6" key="1">
    <citation type="journal article" date="1991" name="Mol. Biol. Med.">
        <title>Sequence of rat alpha 1-macroglobulin, a broad-range proteinase inhibitor from the alpha-macroglobulin-complement family.</title>
        <authorList>
            <person name="Eggertsen G."/>
            <person name="Hudson G."/>
            <person name="Shiels B."/>
            <person name="Reed D."/>
            <person name="Fey G.H."/>
        </authorList>
    </citation>
    <scope>NUCLEOTIDE SEQUENCE [MRNA]</scope>
    <scope>PROTEIN SEQUENCE OF 25-54; 724-743; 901-930 AND 1245-1269</scope>
    <scope>SUBCELLULAR LOCATION</scope>
    <scope>TISSUE SPECIFICITY</scope>
    <source>
        <strain evidence="6">Fischer 344</strain>
        <tissue evidence="6">Liver</tissue>
    </source>
</reference>
<reference evidence="7" key="2">
    <citation type="journal article" date="1992" name="Biochemistry">
        <title>cDNA cloning and sequencing of rat alpha 1-macroglobulin.</title>
        <authorList>
            <person name="Warmegard B."/>
            <person name="Martin N."/>
            <person name="Johansson S."/>
        </authorList>
    </citation>
    <scope>NUCLEOTIDE SEQUENCE [MRNA]</scope>
    <source>
        <strain evidence="7">Sprague-Dawley</strain>
        <tissue evidence="7">Liver</tissue>
    </source>
</reference>
<reference key="3">
    <citation type="submission" date="2007-04" db="UniProtKB">
        <authorList>
            <person name="Lubec G."/>
            <person name="Chen W.-Q."/>
        </authorList>
    </citation>
    <scope>PROTEIN SEQUENCE OF 1287-1294 AND 1321-1327</scope>
    <scope>IDENTIFICATION BY MASS SPECTROMETRY</scope>
    <source>
        <strain>Sprague-Dawley</strain>
        <tissue>Hippocampus</tissue>
    </source>
</reference>
<reference evidence="8" key="4">
    <citation type="journal article" date="2000" name="Protein Sci.">
        <title>Structure of a rat alpha 1-macroglobulin receptor-binding domain dimer.</title>
        <authorList>
            <person name="Xiao T."/>
            <person name="DeCamp D.L."/>
            <person name="Spran S.R."/>
        </authorList>
    </citation>
    <scope>X-RAY CRYSTALLOGRAPHY (2.3 ANGSTROMS) OF 1362-1495</scope>
</reference>
<sequence>MRRNQLPIPVFLLLLLLLPRDATAATGKPRYVVLVPSELYAGVPEKVCVHLNHLNETVTLNVTLEYGVQYSNLLIDQAVDKDSSYCSSFTISRPLSPSALIAVEIKGPTHHFIKKKSMWITKAESPVFVQTDKPIYKPGQTVKFRVVSVDISFRPVNETFPVVYIENPKRNRIFQWQNVDLPGGLHQLSFPLSVEPALGIYKVVVQKDSGKKIEHSFEVKEYVLPKFEVQVKMPKTMAFLEEELVVTACGLYTYGKPVPGLVTMKVCRKYTQSYSNCHGQHSKSICEEFSKQADEKGCFRQVVKTKVFQPRQKGYDMKIEVEAKIKEDGTGIELTGTGSCEIANTLSKLKFTKANTFYRPGLPFFGQVLLVDEKGQPIPNKNLTVQVNSVRSQFTFTTDEHGLANILIDTTNFTFSFMGIRVIYKQNNICFDNWWVDEYHTQADHSAARIFSPSRSYIQLELVLGTLACGQTQEIRIHFLLNEDALKDAKDLTFYYLIKARGSIFNSGSHVLPLEQGKVKGVVSFPIRVEPGMAPVAKLIVYTILPNEELIADVQKFDIEKCFANTVNLSFPSAQSLPASDTHLTVKATPLSLCALTAVDQSVLLLKPEAKLSPQSIYNLLPQKAEQGAYLGPLPYKGGENCIKAEDITHNGIVYTPKQDLNDNDAYSVFQSIGLKIFTNTRVHKPRYCPMYQAYPPLPYVGEPQALAMSAIPGAGYRSSNIRTSSMMMMGASEVAQEVEVRETVRKYFPETWIWDMVPLDLSGDGELPVKVPDTITEWKASAFCLSGTTGLGLSSTISHKVFQPFFLELTLPYSVVRGEAFILKATVLNYMPHCIRIHVSLEMSPDFLAVPVGSHEDSHCICGNERKTVSWAVTPKSLGEVNFTATAEALQSPELCGNKVAEVPALVQKDTVVKPVIVEPEGIEKEQTYNTLLCPQDAELQENWTLDLPANVVEGSARATQSVLGDILGSAMQNLQNLLQMPYGCGEQNMVLFVPNIYVLEYLNETQQLTEAIKSKAISYLISGYQRQLNYQHSDGSYSTFGDRGMRHSQGNTWLTAFVLKAFAQAQSYIYIEKTHITNAFNWLSMKQRENGCFQQSGSLLNNAMKGGVDDEVTLSAYITIALLEMPLPVTHSVVRNALFCLETAWASISNSQESHVYTKALLAYAFALAGNRAKRSEVLESLNKDAVNEEESVHWQRPKNVEENVREMRSFSYKPRAPSAEVEMTAYVLLAYLTSASSRPTRDLSSSDLTTASKIVKWISKQQNSHGGFSSTQDTVVALQALSKYGAATFTKSNKEVSVTIESSGTVSGTLHVNNGNRLLLQEVRLADLPGNYITKVSGSGCVYLQTSLKYNILPEAEGEAPFTLKVNTLPLNFDKAEHHRKFQIHINVSYIGERPNSNMVIVDVKMVSGFIPVKPSVKKLQDQSNIQRTEVNTNHVLIYIEKLTNQTMGFSFAVEQDIPVKNLKPAPVKVYDYYETDEFAIEEYSAPFSSDSEQGNA</sequence>
<protein>
    <recommendedName>
        <fullName>Alpha-1-macroglobulin</fullName>
        <shortName>Alpha-1-M</shortName>
    </recommendedName>
    <alternativeName>
        <fullName>Alpha-1-macroglobulin 165 kDa subunit</fullName>
    </alternativeName>
    <component>
        <recommendedName>
            <fullName>Alpha-1-macroglobulin 45 kDa subunit</fullName>
        </recommendedName>
    </component>
</protein>
<keyword id="KW-0002">3D-structure</keyword>
<keyword id="KW-0082">Bait region</keyword>
<keyword id="KW-0903">Direct protein sequencing</keyword>
<keyword id="KW-1015">Disulfide bond</keyword>
<keyword id="KW-0325">Glycoprotein</keyword>
<keyword id="KW-0646">Protease inhibitor</keyword>
<keyword id="KW-1185">Reference proteome</keyword>
<keyword id="KW-0964">Secreted</keyword>
<keyword id="KW-0722">Serine protease inhibitor</keyword>
<keyword id="KW-0732">Signal</keyword>
<keyword id="KW-0882">Thioester bond</keyword>
<feature type="signal peptide" evidence="4">
    <location>
        <begin position="1"/>
        <end position="24"/>
    </location>
</feature>
<feature type="chain" id="PRO_0000271403" description="Alpha-1-macroglobulin">
    <location>
        <begin position="25"/>
        <end position="1500"/>
    </location>
</feature>
<feature type="chain" id="PRO_0000271404" description="Alpha-1-macroglobulin 45 kDa subunit" evidence="4">
    <location>
        <begin position="1245"/>
        <end position="1500"/>
    </location>
</feature>
<feature type="region of interest" description="Bait region" evidence="1">
    <location>
        <begin position="686"/>
        <end position="746"/>
    </location>
</feature>
<feature type="region of interest" description="Receptor-binding domain" evidence="3">
    <location>
        <begin position="1360"/>
        <end position="1500"/>
    </location>
</feature>
<feature type="glycosylation site" description="N-linked (GlcNAc...) asparagine" evidence="2">
    <location>
        <position position="55"/>
    </location>
</feature>
<feature type="glycosylation site" description="N-linked (GlcNAc...) asparagine" evidence="2">
    <location>
        <position position="61"/>
    </location>
</feature>
<feature type="glycosylation site" description="N-linked (GlcNAc...) asparagine" evidence="2">
    <location>
        <position position="157"/>
    </location>
</feature>
<feature type="glycosylation site" description="N-linked (GlcNAc...) asparagine" evidence="2">
    <location>
        <position position="382"/>
    </location>
</feature>
<feature type="glycosylation site" description="N-linked (GlcNAc...) asparagine" evidence="2">
    <location>
        <position position="412"/>
    </location>
</feature>
<feature type="glycosylation site" description="N-linked (GlcNAc...) asparagine" evidence="2">
    <location>
        <position position="568"/>
    </location>
</feature>
<feature type="glycosylation site" description="N-linked (GlcNAc...) asparagine" evidence="2">
    <location>
        <position position="883"/>
    </location>
</feature>
<feature type="glycosylation site" description="N-linked (GlcNAc...) asparagine" evidence="2">
    <location>
        <position position="944"/>
    </location>
</feature>
<feature type="glycosylation site" description="N-linked (GlcNAc...) asparagine" evidence="2">
    <location>
        <position position="1005"/>
    </location>
</feature>
<feature type="glycosylation site" description="N-linked (GlcNAc...) asparagine" evidence="2">
    <location>
        <position position="1390"/>
    </location>
</feature>
<feature type="glycosylation site" description="N-linked (GlcNAc...) asparagine" evidence="2">
    <location>
        <position position="1448"/>
    </location>
</feature>
<feature type="disulfide bond" evidence="1">
    <location>
        <begin position="48"/>
        <end position="86"/>
    </location>
</feature>
<feature type="disulfide bond" evidence="1">
    <location>
        <begin position="249"/>
        <end position="298"/>
    </location>
</feature>
<feature type="disulfide bond" evidence="1">
    <location>
        <begin position="267"/>
        <end position="286"/>
    </location>
</feature>
<feature type="disulfide bond" description="Interchain (with C-430)" evidence="1">
    <location>
        <position position="277"/>
    </location>
</feature>
<feature type="disulfide bond" description="Interchain (with C-277)" evidence="1">
    <location>
        <position position="430"/>
    </location>
</feature>
<feature type="disulfide bond" evidence="1">
    <location>
        <begin position="469"/>
        <end position="562"/>
    </location>
</feature>
<feature type="disulfide bond" evidence="1">
    <location>
        <begin position="594"/>
        <end position="785"/>
    </location>
</feature>
<feature type="disulfide bond" evidence="1">
    <location>
        <begin position="642"/>
        <end position="689"/>
    </location>
</feature>
<feature type="disulfide bond" evidence="1">
    <location>
        <begin position="835"/>
        <end position="863"/>
    </location>
</feature>
<feature type="disulfide bond" evidence="1">
    <location>
        <begin position="861"/>
        <end position="897"/>
    </location>
</feature>
<feature type="disulfide bond" evidence="1">
    <location>
        <begin position="935"/>
        <end position="1344"/>
    </location>
</feature>
<feature type="disulfide bond" evidence="1">
    <location>
        <begin position="1094"/>
        <end position="1142"/>
    </location>
</feature>
<feature type="cross-link" description="Isoglutamyl cysteine thioester (Cys-Gln)" evidence="1">
    <location>
        <begin position="986"/>
        <end position="989"/>
    </location>
</feature>
<feature type="sequence conflict" description="In Ref. 1; AA sequence." evidence="5" ref="1">
    <original>H</original>
    <variation>A</variation>
    <location>
        <position position="50"/>
    </location>
</feature>
<feature type="sequence conflict" description="In Ref. 1; AA sequence." evidence="5" ref="1">
    <original>I</original>
    <variation>P</variation>
    <location>
        <position position="918"/>
    </location>
</feature>
<feature type="sequence conflict" description="In Ref. 1; AA sequence." evidence="5" ref="1">
    <original>IE</original>
    <variation>AT</variation>
    <location>
        <begin position="924"/>
        <end position="925"/>
    </location>
</feature>
<feature type="strand" evidence="10">
    <location>
        <begin position="1364"/>
        <end position="1375"/>
    </location>
</feature>
<feature type="turn" evidence="10">
    <location>
        <begin position="1376"/>
        <end position="1378"/>
    </location>
</feature>
<feature type="strand" evidence="10">
    <location>
        <begin position="1384"/>
        <end position="1393"/>
    </location>
</feature>
<feature type="strand" evidence="10">
    <location>
        <begin position="1395"/>
        <end position="1399"/>
    </location>
</feature>
<feature type="strand" evidence="10">
    <location>
        <begin position="1401"/>
        <end position="1408"/>
    </location>
</feature>
<feature type="strand" evidence="10">
    <location>
        <begin position="1413"/>
        <end position="1415"/>
    </location>
</feature>
<feature type="helix" evidence="10">
    <location>
        <begin position="1417"/>
        <end position="1421"/>
    </location>
</feature>
<feature type="helix" evidence="10">
    <location>
        <begin position="1422"/>
        <end position="1425"/>
    </location>
</feature>
<feature type="strand" evidence="10">
    <location>
        <begin position="1429"/>
        <end position="1435"/>
    </location>
</feature>
<feature type="strand" evidence="10">
    <location>
        <begin position="1438"/>
        <end position="1444"/>
    </location>
</feature>
<feature type="strand" evidence="10">
    <location>
        <begin position="1451"/>
        <end position="1461"/>
    </location>
</feature>
<feature type="strand" evidence="10">
    <location>
        <begin position="1469"/>
        <end position="1477"/>
    </location>
</feature>
<feature type="strand" evidence="10">
    <location>
        <begin position="1481"/>
        <end position="1487"/>
    </location>
</feature>
<comment type="function">
    <text evidence="1">Is able to inhibit all four classes of proteinases by a unique 'trapping' mechanism. This protein has a peptide stretch, called the 'bait region' which contains specific cleavage sites for different proteinases. When a proteinase cleaves the bait region, a conformational change is induced in the protein which traps the proteinase. The entrapped enzyme remains active against low molecular weight substrates (activity against high molecular weight substrates is greatly reduced). Following cleavage in the bait region a thioester bond is hydrolyzed and mediates the covalent binding of the protein to the proteinase (By similarity).</text>
</comment>
<comment type="subunit">
    <text evidence="1">Homotetramer; disulfide-linked.</text>
</comment>
<comment type="subcellular location">
    <subcellularLocation>
        <location evidence="4">Secreted</location>
    </subcellularLocation>
</comment>
<comment type="tissue specificity">
    <text evidence="4">Widely expressed. Highest level in ovary, testis, uterus and prostate. Protein found in plasma.</text>
</comment>
<comment type="similarity">
    <text evidence="2">Belongs to the protease inhibitor I39 (alpha-2-macroglobulin) family.</text>
</comment>
<name>A1M_RAT</name>